<accession>A9M9H8</accession>
<comment type="function">
    <text evidence="1">Involved in the biosynthesis of the osmoprotectant glycine betaine. Catalyzes the oxidation of choline to betaine aldehyde and betaine aldehyde to glycine betaine at the same rate.</text>
</comment>
<comment type="catalytic activity">
    <reaction evidence="1">
        <text>choline + A = betaine aldehyde + AH2</text>
        <dbReference type="Rhea" id="RHEA:17433"/>
        <dbReference type="ChEBI" id="CHEBI:13193"/>
        <dbReference type="ChEBI" id="CHEBI:15354"/>
        <dbReference type="ChEBI" id="CHEBI:15710"/>
        <dbReference type="ChEBI" id="CHEBI:17499"/>
        <dbReference type="EC" id="1.1.99.1"/>
    </reaction>
</comment>
<comment type="catalytic activity">
    <reaction evidence="1">
        <text>betaine aldehyde + NAD(+) + H2O = glycine betaine + NADH + 2 H(+)</text>
        <dbReference type="Rhea" id="RHEA:15305"/>
        <dbReference type="ChEBI" id="CHEBI:15377"/>
        <dbReference type="ChEBI" id="CHEBI:15378"/>
        <dbReference type="ChEBI" id="CHEBI:15710"/>
        <dbReference type="ChEBI" id="CHEBI:17750"/>
        <dbReference type="ChEBI" id="CHEBI:57540"/>
        <dbReference type="ChEBI" id="CHEBI:57945"/>
        <dbReference type="EC" id="1.2.1.8"/>
    </reaction>
</comment>
<comment type="cofactor">
    <cofactor evidence="1">
        <name>FAD</name>
        <dbReference type="ChEBI" id="CHEBI:57692"/>
    </cofactor>
</comment>
<comment type="pathway">
    <text evidence="1">Amine and polyamine biosynthesis; betaine biosynthesis via choline pathway; betaine aldehyde from choline (cytochrome c reductase route): step 1/1.</text>
</comment>
<comment type="similarity">
    <text evidence="1">Belongs to the GMC oxidoreductase family.</text>
</comment>
<protein>
    <recommendedName>
        <fullName evidence="1">Oxygen-dependent choline dehydrogenase</fullName>
        <shortName evidence="1">CDH</shortName>
        <shortName evidence="1">CHD</shortName>
        <ecNumber evidence="1">1.1.99.1</ecNumber>
    </recommendedName>
    <alternativeName>
        <fullName evidence="1">Betaine aldehyde dehydrogenase</fullName>
        <shortName evidence="1">BADH</shortName>
        <ecNumber evidence="1">1.2.1.8</ecNumber>
    </alternativeName>
</protein>
<keyword id="KW-0274">FAD</keyword>
<keyword id="KW-0285">Flavoprotein</keyword>
<keyword id="KW-0520">NAD</keyword>
<keyword id="KW-0560">Oxidoreductase</keyword>
<keyword id="KW-1185">Reference proteome</keyword>
<organism>
    <name type="scientific">Brucella canis (strain ATCC 23365 / NCTC 10854 / RM-666)</name>
    <dbReference type="NCBI Taxonomy" id="483179"/>
    <lineage>
        <taxon>Bacteria</taxon>
        <taxon>Pseudomonadati</taxon>
        <taxon>Pseudomonadota</taxon>
        <taxon>Alphaproteobacteria</taxon>
        <taxon>Hyphomicrobiales</taxon>
        <taxon>Brucellaceae</taxon>
        <taxon>Brucella/Ochrobactrum group</taxon>
        <taxon>Brucella</taxon>
    </lineage>
</organism>
<reference key="1">
    <citation type="submission" date="2007-10" db="EMBL/GenBank/DDBJ databases">
        <title>Brucella canis ATCC 23365 whole genome shotgun sequencing project.</title>
        <authorList>
            <person name="Setubal J.C."/>
            <person name="Bowns C."/>
            <person name="Boyle S."/>
            <person name="Crasta O.R."/>
            <person name="Czar M.J."/>
            <person name="Dharmanolla C."/>
            <person name="Gillespie J.J."/>
            <person name="Kenyon R.W."/>
            <person name="Lu J."/>
            <person name="Mane S."/>
            <person name="Mohapatra S."/>
            <person name="Nagrani S."/>
            <person name="Purkayastha A."/>
            <person name="Rajasimha H.K."/>
            <person name="Shallom J.M."/>
            <person name="Shallom S."/>
            <person name="Shukla M."/>
            <person name="Snyder E.E."/>
            <person name="Sobral B.W."/>
            <person name="Wattam A.R."/>
            <person name="Will R."/>
            <person name="Williams K."/>
            <person name="Yoo H."/>
            <person name="Bruce D."/>
            <person name="Detter C."/>
            <person name="Munk C."/>
            <person name="Brettin T.S."/>
        </authorList>
    </citation>
    <scope>NUCLEOTIDE SEQUENCE [LARGE SCALE GENOMIC DNA]</scope>
    <source>
        <strain>ATCC 23365 / NCTC 10854 / RM-666</strain>
    </source>
</reference>
<sequence length="549" mass="60594">MEADFVIIGSGSAGSAMAYRLSEDGRYSVIVIEYGVPDVGPLIQMPAALSFPMNMETYDWGFSSEPEPHIGGRSLVTPRGKVLGGSSSINGMVYVRGHACDFDHWSQSGARGWAYADVLPYFKRMENSQGGQEGWRGTNGPLYVQRGKRDNPLFHAFVEAGHQAGFEVADDYNGEKQEGFGPMEQTIHNGRRWSAANAYLKPALKRPNVKLVKGFARKIVLEGKRAVGVEIEAGRTFSTIRARREVIIAASSINSPKLLMLSGIGPAAHLKEHGIDLVADRPGVGQNLQDHLEVYIQQECTQPITLYSELNLFSKARIGVEWLLFKTGDGATNHFESAAFVRSKAGVEYPDIQYHFLPVAIRYDGKAAAQSHGFQAHVGPMRSKSRGSVTLRSANPREKPVIKFNYMSHEDDWADFRHCVRLTREIFGQAAFDPYRGAEIQPGAHVQTDDEIDNFIREHVESAFHPCGTCKMGAVDDPMAVVDPECRVIGVEGLRVADSSIFPRITNGNLNGPSIMVGEKASDHILGRTPLARSNQEPWINPRWQVSDR</sequence>
<name>BETA_BRUC2</name>
<feature type="chain" id="PRO_1000083492" description="Oxygen-dependent choline dehydrogenase">
    <location>
        <begin position="1"/>
        <end position="549"/>
    </location>
</feature>
<feature type="active site" description="Proton acceptor" evidence="1">
    <location>
        <position position="465"/>
    </location>
</feature>
<feature type="binding site" evidence="1">
    <location>
        <begin position="4"/>
        <end position="33"/>
    </location>
    <ligand>
        <name>FAD</name>
        <dbReference type="ChEBI" id="CHEBI:57692"/>
    </ligand>
</feature>
<dbReference type="EC" id="1.1.99.1" evidence="1"/>
<dbReference type="EC" id="1.2.1.8" evidence="1"/>
<dbReference type="EMBL" id="CP000872">
    <property type="protein sequence ID" value="ABX61642.1"/>
    <property type="molecule type" value="Genomic_DNA"/>
</dbReference>
<dbReference type="RefSeq" id="WP_004691946.1">
    <property type="nucleotide sequence ID" value="NC_010103.1"/>
</dbReference>
<dbReference type="SMR" id="A9M9H8"/>
<dbReference type="CAZy" id="AA3">
    <property type="family name" value="Auxiliary Activities 3"/>
</dbReference>
<dbReference type="GeneID" id="55590289"/>
<dbReference type="KEGG" id="bcs:BCAN_A0565"/>
<dbReference type="HOGENOM" id="CLU_002865_7_1_5"/>
<dbReference type="PhylomeDB" id="A9M9H8"/>
<dbReference type="UniPathway" id="UPA00529">
    <property type="reaction ID" value="UER00385"/>
</dbReference>
<dbReference type="Proteomes" id="UP000001385">
    <property type="component" value="Chromosome I"/>
</dbReference>
<dbReference type="GO" id="GO:0008802">
    <property type="term" value="F:betaine-aldehyde dehydrogenase (NAD+) activity"/>
    <property type="evidence" value="ECO:0007669"/>
    <property type="project" value="UniProtKB-EC"/>
</dbReference>
<dbReference type="GO" id="GO:0008812">
    <property type="term" value="F:choline dehydrogenase activity"/>
    <property type="evidence" value="ECO:0007669"/>
    <property type="project" value="UniProtKB-UniRule"/>
</dbReference>
<dbReference type="GO" id="GO:0050660">
    <property type="term" value="F:flavin adenine dinucleotide binding"/>
    <property type="evidence" value="ECO:0007669"/>
    <property type="project" value="InterPro"/>
</dbReference>
<dbReference type="GO" id="GO:0019285">
    <property type="term" value="P:glycine betaine biosynthetic process from choline"/>
    <property type="evidence" value="ECO:0007669"/>
    <property type="project" value="UniProtKB-UniRule"/>
</dbReference>
<dbReference type="Gene3D" id="3.50.50.60">
    <property type="entry name" value="FAD/NAD(P)-binding domain"/>
    <property type="match status" value="1"/>
</dbReference>
<dbReference type="Gene3D" id="3.30.560.10">
    <property type="entry name" value="Glucose Oxidase, domain 3"/>
    <property type="match status" value="1"/>
</dbReference>
<dbReference type="HAMAP" id="MF_00750">
    <property type="entry name" value="Choline_dehydrogen"/>
    <property type="match status" value="1"/>
</dbReference>
<dbReference type="InterPro" id="IPR011533">
    <property type="entry name" value="BetA"/>
</dbReference>
<dbReference type="InterPro" id="IPR036188">
    <property type="entry name" value="FAD/NAD-bd_sf"/>
</dbReference>
<dbReference type="InterPro" id="IPR012132">
    <property type="entry name" value="GMC_OxRdtase"/>
</dbReference>
<dbReference type="InterPro" id="IPR000172">
    <property type="entry name" value="GMC_OxRdtase_N"/>
</dbReference>
<dbReference type="InterPro" id="IPR007867">
    <property type="entry name" value="GMC_OxRtase_C"/>
</dbReference>
<dbReference type="NCBIfam" id="TIGR01810">
    <property type="entry name" value="betA"/>
    <property type="match status" value="1"/>
</dbReference>
<dbReference type="NCBIfam" id="NF002550">
    <property type="entry name" value="PRK02106.1"/>
    <property type="match status" value="1"/>
</dbReference>
<dbReference type="PANTHER" id="PTHR11552:SF147">
    <property type="entry name" value="CHOLINE DEHYDROGENASE, MITOCHONDRIAL"/>
    <property type="match status" value="1"/>
</dbReference>
<dbReference type="PANTHER" id="PTHR11552">
    <property type="entry name" value="GLUCOSE-METHANOL-CHOLINE GMC OXIDOREDUCTASE"/>
    <property type="match status" value="1"/>
</dbReference>
<dbReference type="Pfam" id="PF05199">
    <property type="entry name" value="GMC_oxred_C"/>
    <property type="match status" value="1"/>
</dbReference>
<dbReference type="Pfam" id="PF00732">
    <property type="entry name" value="GMC_oxred_N"/>
    <property type="match status" value="1"/>
</dbReference>
<dbReference type="PIRSF" id="PIRSF000137">
    <property type="entry name" value="Alcohol_oxidase"/>
    <property type="match status" value="1"/>
</dbReference>
<dbReference type="SUPFAM" id="SSF54373">
    <property type="entry name" value="FAD-linked reductases, C-terminal domain"/>
    <property type="match status" value="1"/>
</dbReference>
<dbReference type="SUPFAM" id="SSF51905">
    <property type="entry name" value="FAD/NAD(P)-binding domain"/>
    <property type="match status" value="1"/>
</dbReference>
<dbReference type="PROSITE" id="PS00623">
    <property type="entry name" value="GMC_OXRED_1"/>
    <property type="match status" value="1"/>
</dbReference>
<dbReference type="PROSITE" id="PS00624">
    <property type="entry name" value="GMC_OXRED_2"/>
    <property type="match status" value="1"/>
</dbReference>
<evidence type="ECO:0000255" key="1">
    <source>
        <dbReference type="HAMAP-Rule" id="MF_00750"/>
    </source>
</evidence>
<proteinExistence type="inferred from homology"/>
<gene>
    <name evidence="1" type="primary">betA</name>
    <name type="ordered locus">BCAN_A0565</name>
</gene>